<keyword id="KW-0998">Cell outer membrane</keyword>
<keyword id="KW-0961">Cell wall biogenesis/degradation</keyword>
<keyword id="KW-0449">Lipoprotein</keyword>
<keyword id="KW-0456">Lyase</keyword>
<keyword id="KW-0472">Membrane</keyword>
<keyword id="KW-0564">Palmitate</keyword>
<keyword id="KW-0732">Signal</keyword>
<dbReference type="EC" id="4.2.2.n2" evidence="1"/>
<dbReference type="EMBL" id="AM933173">
    <property type="protein sequence ID" value="CAR37194.1"/>
    <property type="molecule type" value="Genomic_DNA"/>
</dbReference>
<dbReference type="RefSeq" id="WP_000776974.1">
    <property type="nucleotide sequence ID" value="NC_011274.1"/>
</dbReference>
<dbReference type="SMR" id="B5R901"/>
<dbReference type="CAZy" id="GH23">
    <property type="family name" value="Glycoside Hydrolase Family 23"/>
</dbReference>
<dbReference type="KEGG" id="seg:SG1317"/>
<dbReference type="HOGENOM" id="CLU_103257_0_0_6"/>
<dbReference type="Proteomes" id="UP000008321">
    <property type="component" value="Chromosome"/>
</dbReference>
<dbReference type="GO" id="GO:0009279">
    <property type="term" value="C:cell outer membrane"/>
    <property type="evidence" value="ECO:0007669"/>
    <property type="project" value="UniProtKB-SubCell"/>
</dbReference>
<dbReference type="GO" id="GO:0008932">
    <property type="term" value="F:lytic endotransglycosylase activity"/>
    <property type="evidence" value="ECO:0007669"/>
    <property type="project" value="InterPro"/>
</dbReference>
<dbReference type="GO" id="GO:0016998">
    <property type="term" value="P:cell wall macromolecule catabolic process"/>
    <property type="evidence" value="ECO:0007669"/>
    <property type="project" value="UniProtKB-UniRule"/>
</dbReference>
<dbReference type="GO" id="GO:0071555">
    <property type="term" value="P:cell wall organization"/>
    <property type="evidence" value="ECO:0007669"/>
    <property type="project" value="UniProtKB-KW"/>
</dbReference>
<dbReference type="GO" id="GO:0000270">
    <property type="term" value="P:peptidoglycan metabolic process"/>
    <property type="evidence" value="ECO:0007669"/>
    <property type="project" value="InterPro"/>
</dbReference>
<dbReference type="CDD" id="cd16893">
    <property type="entry name" value="LT_MltC_MltE"/>
    <property type="match status" value="1"/>
</dbReference>
<dbReference type="Gene3D" id="1.10.530.10">
    <property type="match status" value="1"/>
</dbReference>
<dbReference type="HAMAP" id="MF_01381">
    <property type="entry name" value="EmtA"/>
    <property type="match status" value="1"/>
</dbReference>
<dbReference type="InterPro" id="IPR023946">
    <property type="entry name" value="EmtA"/>
</dbReference>
<dbReference type="InterPro" id="IPR023346">
    <property type="entry name" value="Lysozyme-like_dom_sf"/>
</dbReference>
<dbReference type="InterPro" id="IPR000189">
    <property type="entry name" value="Transglyc_AS"/>
</dbReference>
<dbReference type="InterPro" id="IPR008258">
    <property type="entry name" value="Transglycosylase_SLT_dom_1"/>
</dbReference>
<dbReference type="NCBIfam" id="NF012014">
    <property type="entry name" value="PRK15470.1"/>
    <property type="match status" value="1"/>
</dbReference>
<dbReference type="PANTHER" id="PTHR37423:SF4">
    <property type="entry name" value="ENDO-TYPE MEMBRANE-BOUND LYTIC MUREIN TRANSGLYCOSYLASE A"/>
    <property type="match status" value="1"/>
</dbReference>
<dbReference type="PANTHER" id="PTHR37423">
    <property type="entry name" value="SOLUBLE LYTIC MUREIN TRANSGLYCOSYLASE-RELATED"/>
    <property type="match status" value="1"/>
</dbReference>
<dbReference type="Pfam" id="PF01464">
    <property type="entry name" value="SLT"/>
    <property type="match status" value="1"/>
</dbReference>
<dbReference type="SUPFAM" id="SSF53955">
    <property type="entry name" value="Lysozyme-like"/>
    <property type="match status" value="1"/>
</dbReference>
<dbReference type="PROSITE" id="PS51257">
    <property type="entry name" value="PROKAR_LIPOPROTEIN"/>
    <property type="match status" value="1"/>
</dbReference>
<dbReference type="PROSITE" id="PS00922">
    <property type="entry name" value="TRANSGLYCOSYLASE"/>
    <property type="match status" value="1"/>
</dbReference>
<reference key="1">
    <citation type="journal article" date="2008" name="Genome Res.">
        <title>Comparative genome analysis of Salmonella enteritidis PT4 and Salmonella gallinarum 287/91 provides insights into evolutionary and host adaptation pathways.</title>
        <authorList>
            <person name="Thomson N.R."/>
            <person name="Clayton D.J."/>
            <person name="Windhorst D."/>
            <person name="Vernikos G."/>
            <person name="Davidson S."/>
            <person name="Churcher C."/>
            <person name="Quail M.A."/>
            <person name="Stevens M."/>
            <person name="Jones M.A."/>
            <person name="Watson M."/>
            <person name="Barron A."/>
            <person name="Layton A."/>
            <person name="Pickard D."/>
            <person name="Kingsley R.A."/>
            <person name="Bignell A."/>
            <person name="Clark L."/>
            <person name="Harris B."/>
            <person name="Ormond D."/>
            <person name="Abdellah Z."/>
            <person name="Brooks K."/>
            <person name="Cherevach I."/>
            <person name="Chillingworth T."/>
            <person name="Woodward J."/>
            <person name="Norberczak H."/>
            <person name="Lord A."/>
            <person name="Arrowsmith C."/>
            <person name="Jagels K."/>
            <person name="Moule S."/>
            <person name="Mungall K."/>
            <person name="Saunders M."/>
            <person name="Whitehead S."/>
            <person name="Chabalgoity J.A."/>
            <person name="Maskell D."/>
            <person name="Humphreys T."/>
            <person name="Roberts M."/>
            <person name="Barrow P.A."/>
            <person name="Dougan G."/>
            <person name="Parkhill J."/>
        </authorList>
    </citation>
    <scope>NUCLEOTIDE SEQUENCE [LARGE SCALE GENOMIC DNA]</scope>
    <source>
        <strain>287/91 / NCTC 13346</strain>
    </source>
</reference>
<feature type="signal peptide" evidence="1">
    <location>
        <begin position="1"/>
        <end position="15"/>
    </location>
</feature>
<feature type="chain" id="PRO_1000144959" description="Endo-type membrane-bound lytic murein transglycosylase A">
    <location>
        <begin position="16"/>
        <end position="203"/>
    </location>
</feature>
<feature type="lipid moiety-binding region" description="N-palmitoyl cysteine" evidence="1">
    <location>
        <position position="16"/>
    </location>
</feature>
<feature type="lipid moiety-binding region" description="S-diacylglycerol cysteine" evidence="1">
    <location>
        <position position="16"/>
    </location>
</feature>
<organism>
    <name type="scientific">Salmonella gallinarum (strain 287/91 / NCTC 13346)</name>
    <dbReference type="NCBI Taxonomy" id="550538"/>
    <lineage>
        <taxon>Bacteria</taxon>
        <taxon>Pseudomonadati</taxon>
        <taxon>Pseudomonadota</taxon>
        <taxon>Gammaproteobacteria</taxon>
        <taxon>Enterobacterales</taxon>
        <taxon>Enterobacteriaceae</taxon>
        <taxon>Salmonella</taxon>
    </lineage>
</organism>
<evidence type="ECO:0000255" key="1">
    <source>
        <dbReference type="HAMAP-Rule" id="MF_01381"/>
    </source>
</evidence>
<comment type="function">
    <text evidence="1">Murein-degrading enzyme. May play a role in recycling of muropeptides during cell elongation and/or cell division. Preferentially cleaves at a distance of more than two disaccharide units from the ends of the glycan chain.</text>
</comment>
<comment type="catalytic activity">
    <reaction evidence="1">
        <text>Endolytic cleavage of the (1-&gt;4)-beta-glycosidic linkage between N-acetylmuramic acid (MurNAc) and N-acetylglucosamine (GlcNAc) residues in peptidoglycan with concomitant formation of a 1,6-anhydrobond in the MurNAc residue.</text>
        <dbReference type="EC" id="4.2.2.n2"/>
    </reaction>
</comment>
<comment type="subcellular location">
    <subcellularLocation>
        <location evidence="1">Cell outer membrane</location>
        <topology evidence="1">Lipid-anchor</topology>
    </subcellularLocation>
</comment>
<comment type="similarity">
    <text evidence="1">Belongs to the transglycosylase Slt family.</text>
</comment>
<gene>
    <name evidence="1" type="primary">emtA</name>
    <name type="ordered locus">SG1317</name>
</gene>
<proteinExistence type="inferred from homology"/>
<accession>B5R901</accession>
<sequence>MKLRWFAFLVVILAGCSSKQDYRNPPWNAEVPVKRAMQWMPISEKAGAAWGVDPHLITAIIAIESGGNPNAVSKSNAIGLMQLKASTSGRDVYRRMGWRGEPTTSELKNPERNISMGAAYLSILENGPLAGIKDPQVMQYALVVSYANGAGALLRTFSSDRKKAIEKINDLDADEFFEHVVDNHPAPQAPRYIWKLQQALDAM</sequence>
<protein>
    <recommendedName>
        <fullName evidence="1">Endo-type membrane-bound lytic murein transglycosylase A</fullName>
        <ecNumber evidence="1">4.2.2.n2</ecNumber>
    </recommendedName>
    <alternativeName>
        <fullName evidence="1">Peptidoglycan lytic endotransglycosylase</fullName>
    </alternativeName>
</protein>
<name>EMTA_SALG2</name>